<reference key="1">
    <citation type="journal article" date="1994" name="Proc. Natl. Acad. Sci. U.S.A.">
        <title>D1A, D1B, and D1C dopamine receptors from Xenopus laevis.</title>
        <authorList>
            <person name="Sugamori K.S."/>
            <person name="Demchyshyn L.L."/>
            <person name="Chung M."/>
            <person name="Niznik H.B."/>
        </authorList>
    </citation>
    <scope>NUCLEOTIDE SEQUENCE [GENOMIC DNA]</scope>
</reference>
<proteinExistence type="evidence at transcript level"/>
<evidence type="ECO:0000250" key="1"/>
<evidence type="ECO:0000250" key="2">
    <source>
        <dbReference type="UniProtKB" id="P21728"/>
    </source>
</evidence>
<evidence type="ECO:0000255" key="3"/>
<evidence type="ECO:0000255" key="4">
    <source>
        <dbReference type="PROSITE-ProRule" id="PRU00521"/>
    </source>
</evidence>
<keyword id="KW-1003">Cell membrane</keyword>
<keyword id="KW-0966">Cell projection</keyword>
<keyword id="KW-1015">Disulfide bond</keyword>
<keyword id="KW-0297">G-protein coupled receptor</keyword>
<keyword id="KW-0325">Glycoprotein</keyword>
<keyword id="KW-0449">Lipoprotein</keyword>
<keyword id="KW-0472">Membrane</keyword>
<keyword id="KW-0564">Palmitate</keyword>
<keyword id="KW-0675">Receptor</keyword>
<keyword id="KW-1185">Reference proteome</keyword>
<keyword id="KW-0807">Transducer</keyword>
<keyword id="KW-0812">Transmembrane</keyword>
<keyword id="KW-1133">Transmembrane helix</keyword>
<gene>
    <name type="primary">drd1</name>
</gene>
<comment type="function">
    <text>Dopamine receptor whose activity is mediated by G proteins which activate adenylyl cyclase.</text>
</comment>
<comment type="subcellular location">
    <subcellularLocation>
        <location>Cell membrane</location>
        <topology>Multi-pass membrane protein</topology>
    </subcellularLocation>
    <subcellularLocation>
        <location evidence="2">Cell projection</location>
        <location evidence="2">Cilium membrane</location>
        <topology evidence="3">Multi-pass membrane protein</topology>
    </subcellularLocation>
</comment>
<comment type="tissue specificity">
    <text>Brain.</text>
</comment>
<comment type="similarity">
    <text evidence="4">Belongs to the G-protein coupled receptor 1 family.</text>
</comment>
<sequence length="451" mass="50550">MTFNITSMDEDVLLTERESSFRVLTGCFLSVLILSTLLGNTLVCAAVIRFRHLRSKVTNFFVISLAVSDLLVAVLVMPWKAVAEIAGFWPFGTFCNIWVAFDIMCSTASILNLCVISVDRYWAISSPFRYERKMTPKVAFIMIGVAWTLSVLISFIPVQLNWHKAKTTSFFDLNITLHDRTMDNCDSSLNRTYAISSSLISFYIPVAIMIVTYTRIYRIAAKQIRRISALERAAVHAKNCQNSTSNRNSLDCQQPESSLKTSFKRETKVLKTLSVIMGVFVCCWLPFFILNCIVPFCDPSLTTSGTEPFCISSTTFDVFVWFGWANSSLNPIIYAFNADFRKAFSNLLGCYRLCPTSNNIIETVSINNNGAVVYSCQQEPKGSIPNECNLVYLIPHAIICPEDEVLKKEDESGLSKSLEKMSPAFSGILDYDADVSLEKINPITQNGQPKT</sequence>
<name>DRD1_XENLA</name>
<protein>
    <recommendedName>
        <fullName>D(1A) dopamine receptor</fullName>
    </recommendedName>
    <alternativeName>
        <fullName>Dopamine D1 receptor</fullName>
    </alternativeName>
</protein>
<accession>P42289</accession>
<organism>
    <name type="scientific">Xenopus laevis</name>
    <name type="common">African clawed frog</name>
    <dbReference type="NCBI Taxonomy" id="8355"/>
    <lineage>
        <taxon>Eukaryota</taxon>
        <taxon>Metazoa</taxon>
        <taxon>Chordata</taxon>
        <taxon>Craniata</taxon>
        <taxon>Vertebrata</taxon>
        <taxon>Euteleostomi</taxon>
        <taxon>Amphibia</taxon>
        <taxon>Batrachia</taxon>
        <taxon>Anura</taxon>
        <taxon>Pipoidea</taxon>
        <taxon>Pipidae</taxon>
        <taxon>Xenopodinae</taxon>
        <taxon>Xenopus</taxon>
        <taxon>Xenopus</taxon>
    </lineage>
</organism>
<dbReference type="EMBL" id="U07863">
    <property type="protein sequence ID" value="AAA50828.1"/>
    <property type="molecule type" value="Genomic_DNA"/>
</dbReference>
<dbReference type="PIR" id="I51659">
    <property type="entry name" value="I51659"/>
</dbReference>
<dbReference type="SMR" id="P42289"/>
<dbReference type="GlyCosmos" id="P42289">
    <property type="glycosylation" value="1 site, No reported glycans"/>
</dbReference>
<dbReference type="GeneID" id="108710578"/>
<dbReference type="KEGG" id="xla:108710578"/>
<dbReference type="AGR" id="Xenbase:XB-GENE-6500264"/>
<dbReference type="CTD" id="108710578"/>
<dbReference type="Xenbase" id="XB-GENE-6500264">
    <property type="gene designation" value="drd1.L"/>
</dbReference>
<dbReference type="OMA" id="CCAKLSP"/>
<dbReference type="OrthoDB" id="6021915at2759"/>
<dbReference type="Proteomes" id="UP000186698">
    <property type="component" value="Chromosome 3L"/>
</dbReference>
<dbReference type="Bgee" id="108710578">
    <property type="expression patterns" value="Expressed in camera-type eye and 1 other cell type or tissue"/>
</dbReference>
<dbReference type="GO" id="GO:0060170">
    <property type="term" value="C:ciliary membrane"/>
    <property type="evidence" value="ECO:0007669"/>
    <property type="project" value="UniProtKB-SubCell"/>
</dbReference>
<dbReference type="GO" id="GO:0005886">
    <property type="term" value="C:plasma membrane"/>
    <property type="evidence" value="ECO:0000318"/>
    <property type="project" value="GO_Central"/>
</dbReference>
<dbReference type="GO" id="GO:0045202">
    <property type="term" value="C:synapse"/>
    <property type="evidence" value="ECO:0007669"/>
    <property type="project" value="GOC"/>
</dbReference>
<dbReference type="GO" id="GO:0001588">
    <property type="term" value="F:dopamine neurotransmitter receptor activity, coupled via Gs"/>
    <property type="evidence" value="ECO:0000318"/>
    <property type="project" value="GO_Central"/>
</dbReference>
<dbReference type="GO" id="GO:0004930">
    <property type="term" value="F:G protein-coupled receptor activity"/>
    <property type="evidence" value="ECO:0000318"/>
    <property type="project" value="GO_Central"/>
</dbReference>
<dbReference type="GO" id="GO:0071880">
    <property type="term" value="P:adenylate cyclase-activating adrenergic receptor signaling pathway"/>
    <property type="evidence" value="ECO:0000318"/>
    <property type="project" value="GO_Central"/>
</dbReference>
<dbReference type="GO" id="GO:0007212">
    <property type="term" value="P:G protein-coupled dopamine receptor signaling pathway"/>
    <property type="evidence" value="ECO:0000318"/>
    <property type="project" value="GO_Central"/>
</dbReference>
<dbReference type="GO" id="GO:0043410">
    <property type="term" value="P:positive regulation of MAPK cascade"/>
    <property type="evidence" value="ECO:0000318"/>
    <property type="project" value="GO_Central"/>
</dbReference>
<dbReference type="GO" id="GO:0042311">
    <property type="term" value="P:vasodilation"/>
    <property type="evidence" value="ECO:0007669"/>
    <property type="project" value="InterPro"/>
</dbReference>
<dbReference type="CDD" id="cd15320">
    <property type="entry name" value="7tmA_D1A_dopamine_R"/>
    <property type="match status" value="1"/>
</dbReference>
<dbReference type="FunFam" id="1.20.1070.10:FF:000045">
    <property type="entry name" value="D(1A) dopamine receptor"/>
    <property type="match status" value="1"/>
</dbReference>
<dbReference type="Gene3D" id="1.20.1070.10">
    <property type="entry name" value="Rhodopsin 7-helix transmembrane proteins"/>
    <property type="match status" value="1"/>
</dbReference>
<dbReference type="InterPro" id="IPR001413">
    <property type="entry name" value="Dopamine_D1_rcpt"/>
</dbReference>
<dbReference type="InterPro" id="IPR000929">
    <property type="entry name" value="Dopamine_rcpt"/>
</dbReference>
<dbReference type="InterPro" id="IPR000276">
    <property type="entry name" value="GPCR_Rhodpsn"/>
</dbReference>
<dbReference type="InterPro" id="IPR017452">
    <property type="entry name" value="GPCR_Rhodpsn_7TM"/>
</dbReference>
<dbReference type="PANTHER" id="PTHR24248">
    <property type="entry name" value="ADRENERGIC RECEPTOR-RELATED G-PROTEIN COUPLED RECEPTOR"/>
    <property type="match status" value="1"/>
</dbReference>
<dbReference type="PANTHER" id="PTHR24248:SF139">
    <property type="entry name" value="D(1A) DOPAMINE RECEPTOR"/>
    <property type="match status" value="1"/>
</dbReference>
<dbReference type="Pfam" id="PF00001">
    <property type="entry name" value="7tm_1"/>
    <property type="match status" value="1"/>
</dbReference>
<dbReference type="PRINTS" id="PR00565">
    <property type="entry name" value="DOPAMINED1AR"/>
</dbReference>
<dbReference type="PRINTS" id="PR00242">
    <property type="entry name" value="DOPAMINER"/>
</dbReference>
<dbReference type="PRINTS" id="PR00237">
    <property type="entry name" value="GPCRRHODOPSN"/>
</dbReference>
<dbReference type="SMART" id="SM01381">
    <property type="entry name" value="7TM_GPCR_Srsx"/>
    <property type="match status" value="1"/>
</dbReference>
<dbReference type="SUPFAM" id="SSF81321">
    <property type="entry name" value="Family A G protein-coupled receptor-like"/>
    <property type="match status" value="1"/>
</dbReference>
<dbReference type="PROSITE" id="PS00237">
    <property type="entry name" value="G_PROTEIN_RECEP_F1_1"/>
    <property type="match status" value="1"/>
</dbReference>
<dbReference type="PROSITE" id="PS50262">
    <property type="entry name" value="G_PROTEIN_RECEP_F1_2"/>
    <property type="match status" value="1"/>
</dbReference>
<feature type="chain" id="PRO_0000069380" description="D(1A) dopamine receptor">
    <location>
        <begin position="1"/>
        <end position="451"/>
    </location>
</feature>
<feature type="topological domain" description="Extracellular" evidence="3">
    <location>
        <begin position="1"/>
        <end position="22"/>
    </location>
</feature>
<feature type="transmembrane region" description="Helical; Name=1" evidence="3">
    <location>
        <begin position="23"/>
        <end position="48"/>
    </location>
</feature>
<feature type="topological domain" description="Cytoplasmic" evidence="3">
    <location>
        <begin position="49"/>
        <end position="59"/>
    </location>
</feature>
<feature type="transmembrane region" description="Helical; Name=2" evidence="3">
    <location>
        <begin position="60"/>
        <end position="86"/>
    </location>
</feature>
<feature type="topological domain" description="Extracellular" evidence="3">
    <location>
        <begin position="87"/>
        <end position="95"/>
    </location>
</feature>
<feature type="transmembrane region" description="Helical; Name=3" evidence="3">
    <location>
        <begin position="96"/>
        <end position="118"/>
    </location>
</feature>
<feature type="topological domain" description="Cytoplasmic" evidence="3">
    <location>
        <begin position="119"/>
        <end position="137"/>
    </location>
</feature>
<feature type="transmembrane region" description="Helical; Name=4" evidence="3">
    <location>
        <begin position="138"/>
        <end position="162"/>
    </location>
</feature>
<feature type="topological domain" description="Extracellular" evidence="3">
    <location>
        <begin position="163"/>
        <end position="191"/>
    </location>
</feature>
<feature type="transmembrane region" description="Helical; Name=5" evidence="3">
    <location>
        <begin position="192"/>
        <end position="217"/>
    </location>
</feature>
<feature type="topological domain" description="Cytoplasmic" evidence="3">
    <location>
        <begin position="218"/>
        <end position="271"/>
    </location>
</feature>
<feature type="transmembrane region" description="Helical; Name=6" evidence="3">
    <location>
        <begin position="272"/>
        <end position="298"/>
    </location>
</feature>
<feature type="topological domain" description="Extracellular" evidence="3">
    <location>
        <begin position="299"/>
        <end position="315"/>
    </location>
</feature>
<feature type="transmembrane region" description="Helical; Name=7" evidence="3">
    <location>
        <begin position="316"/>
        <end position="340"/>
    </location>
</feature>
<feature type="topological domain" description="Cytoplasmic" evidence="3">
    <location>
        <begin position="341"/>
        <end position="451"/>
    </location>
</feature>
<feature type="lipid moiety-binding region" description="S-palmitoyl cysteine" evidence="1">
    <location>
        <position position="350"/>
    </location>
</feature>
<feature type="glycosylation site" description="N-linked (GlcNAc...) asparagine" evidence="3">
    <location>
        <position position="4"/>
    </location>
</feature>
<feature type="disulfide bond" evidence="4">
    <location>
        <begin position="95"/>
        <end position="185"/>
    </location>
</feature>